<gene>
    <name type="primary">Chrdl2</name>
    <name type="synonym">Chl2</name>
</gene>
<protein>
    <recommendedName>
        <fullName>Chordin-like protein 2</fullName>
    </recommendedName>
</protein>
<name>CRDL2_MOUSE</name>
<accession>Q8VEA6</accession>
<accession>Q925I3</accession>
<organism>
    <name type="scientific">Mus musculus</name>
    <name type="common">Mouse</name>
    <dbReference type="NCBI Taxonomy" id="10090"/>
    <lineage>
        <taxon>Eukaryota</taxon>
        <taxon>Metazoa</taxon>
        <taxon>Chordata</taxon>
        <taxon>Craniata</taxon>
        <taxon>Vertebrata</taxon>
        <taxon>Euteleostomi</taxon>
        <taxon>Mammalia</taxon>
        <taxon>Eutheria</taxon>
        <taxon>Euarchontoglires</taxon>
        <taxon>Glires</taxon>
        <taxon>Rodentia</taxon>
        <taxon>Myomorpha</taxon>
        <taxon>Muroidea</taxon>
        <taxon>Muridae</taxon>
        <taxon>Murinae</taxon>
        <taxon>Mus</taxon>
        <taxon>Mus</taxon>
    </lineage>
</organism>
<comment type="function">
    <text evidence="1 6 7">Implicated in tumor angiogenesis (By similarity). May inhibits BMPs activity by blocking their interaction with their receptors. Has a negative regulator effect on the cartilage formation/regeneration from immature mesenchymal cells, by preventing or reducing the rate of matrix accumulation. May play a role during myoblast and osteoblast differentiation, and maturation.</text>
</comment>
<comment type="subunit">
    <text evidence="6">Interacts with GDF5. May interact with INHBA, BMP2, BMP4, BMP5, BMP6, and BMP7.</text>
</comment>
<comment type="subcellular location">
    <subcellularLocation>
        <location evidence="1">Secreted</location>
    </subcellularLocation>
</comment>
<comment type="alternative products">
    <event type="alternative splicing"/>
    <isoform>
        <id>Q8VEA6-1</id>
        <name>1</name>
        <sequence type="displayed"/>
    </isoform>
    <text>Additional isoforms seem to exist. Differential expression of isoforms was observed during myoblast and osteoblast differentiation and maturation.</text>
</comment>
<comment type="tissue specificity">
    <text evidence="6">Weakly expressed in the liver and kidney. In reproductive organs expressed in connective tissues such as ligaments of the ovary and oviduct in females, and of testis, epididymis and certain male accessory sex glands in males. Expression was high in uterine myometrium. Weakly expressed in cartilage of the femoral head, patella, articular facets of vertebrae, in the annulus fibrosus of intervertebral disks. In normal cartilage, expression was confined to articular chondrocytes especially in the superficial zone.</text>
</comment>
<comment type="developmental stage">
    <text evidence="6">In embryo expressed to the surface chondrocytes of developing joint cartilage and to the connective tissue of reproductive organs.</text>
</comment>
<comment type="caution">
    <text evidence="8">According to PubMed:14660436 interacts with human BMP2, BMP4, BMP5, BMP6, BMP7 but not human INHBA. According to PubMed:15094188 interacts with human INHBA but not human BMP2, BMP4 and BMP6.</text>
</comment>
<comment type="sequence caution" evidence="8">
    <conflict type="frameshift">
        <sequence resource="EMBL-CDS" id="AAK50575"/>
    </conflict>
</comment>
<dbReference type="EMBL" id="AF338222">
    <property type="protein sequence ID" value="AAK50575.1"/>
    <property type="status" value="ALT_FRAME"/>
    <property type="molecule type" value="mRNA"/>
</dbReference>
<dbReference type="EMBL" id="BC019399">
    <property type="protein sequence ID" value="AAH19399.1"/>
    <property type="molecule type" value="mRNA"/>
</dbReference>
<dbReference type="CCDS" id="CCDS21492.1">
    <molecule id="Q8VEA6-1"/>
</dbReference>
<dbReference type="RefSeq" id="NP_001278249.1">
    <property type="nucleotide sequence ID" value="NM_001291320.1"/>
</dbReference>
<dbReference type="RefSeq" id="NP_598470.3">
    <property type="nucleotide sequence ID" value="NM_133709.3"/>
</dbReference>
<dbReference type="SMR" id="Q8VEA6"/>
<dbReference type="BioGRID" id="213242">
    <property type="interactions" value="6"/>
</dbReference>
<dbReference type="FunCoup" id="Q8VEA6">
    <property type="interactions" value="1"/>
</dbReference>
<dbReference type="STRING" id="10090.ENSMUSP00000102699"/>
<dbReference type="GlyCosmos" id="Q8VEA6">
    <property type="glycosylation" value="2 sites, No reported glycans"/>
</dbReference>
<dbReference type="GlyGen" id="Q8VEA6">
    <property type="glycosylation" value="2 sites"/>
</dbReference>
<dbReference type="PhosphoSitePlus" id="Q8VEA6"/>
<dbReference type="PaxDb" id="10090-ENSMUSP00000032977"/>
<dbReference type="ProteomicsDB" id="284167">
    <molecule id="Q8VEA6-1"/>
</dbReference>
<dbReference type="DNASU" id="69121"/>
<dbReference type="GeneID" id="69121"/>
<dbReference type="KEGG" id="mmu:69121"/>
<dbReference type="AGR" id="MGI:1916371"/>
<dbReference type="CTD" id="25884"/>
<dbReference type="MGI" id="MGI:1916371">
    <property type="gene designation" value="Chrdl2"/>
</dbReference>
<dbReference type="eggNOG" id="ENOG502QQFQ">
    <property type="taxonomic scope" value="Eukaryota"/>
</dbReference>
<dbReference type="InParanoid" id="Q8VEA6"/>
<dbReference type="OrthoDB" id="8173378at2759"/>
<dbReference type="PhylomeDB" id="Q8VEA6"/>
<dbReference type="BioGRID-ORCS" id="69121">
    <property type="hits" value="0 hits in 77 CRISPR screens"/>
</dbReference>
<dbReference type="ChiTaRS" id="Chrdl2">
    <property type="organism name" value="mouse"/>
</dbReference>
<dbReference type="PRO" id="PR:Q8VEA6"/>
<dbReference type="Proteomes" id="UP000000589">
    <property type="component" value="Unplaced"/>
</dbReference>
<dbReference type="RNAct" id="Q8VEA6">
    <property type="molecule type" value="protein"/>
</dbReference>
<dbReference type="GO" id="GO:0005576">
    <property type="term" value="C:extracellular region"/>
    <property type="evidence" value="ECO:0007669"/>
    <property type="project" value="UniProtKB-SubCell"/>
</dbReference>
<dbReference type="GO" id="GO:0002062">
    <property type="term" value="P:chondrocyte differentiation"/>
    <property type="evidence" value="ECO:0000314"/>
    <property type="project" value="MGI"/>
</dbReference>
<dbReference type="GO" id="GO:0030514">
    <property type="term" value="P:negative regulation of BMP signaling pathway"/>
    <property type="evidence" value="ECO:0000314"/>
    <property type="project" value="MGI"/>
</dbReference>
<dbReference type="GO" id="GO:0001503">
    <property type="term" value="P:ossification"/>
    <property type="evidence" value="ECO:0007669"/>
    <property type="project" value="UniProtKB-KW"/>
</dbReference>
<dbReference type="FunFam" id="2.10.70.10:FF:000005">
    <property type="entry name" value="Chordin-like 1, isoform CRA_c"/>
    <property type="match status" value="1"/>
</dbReference>
<dbReference type="Gene3D" id="6.20.200.20">
    <property type="match status" value="1"/>
</dbReference>
<dbReference type="Gene3D" id="2.10.70.10">
    <property type="entry name" value="Complement Module, domain 1"/>
    <property type="match status" value="2"/>
</dbReference>
<dbReference type="InterPro" id="IPR045717">
    <property type="entry name" value="CHRDL1/2"/>
</dbReference>
<dbReference type="InterPro" id="IPR045716">
    <property type="entry name" value="CHRDL_1/2_C"/>
</dbReference>
<dbReference type="InterPro" id="IPR001007">
    <property type="entry name" value="VWF_dom"/>
</dbReference>
<dbReference type="PANTHER" id="PTHR46303:SF3">
    <property type="entry name" value="CHORDIN-LIKE PROTEIN 2"/>
    <property type="match status" value="1"/>
</dbReference>
<dbReference type="PANTHER" id="PTHR46303">
    <property type="entry name" value="VWFC DOMAIN-CONTAINING PROTEIN"/>
    <property type="match status" value="1"/>
</dbReference>
<dbReference type="Pfam" id="PF19548">
    <property type="entry name" value="CHRDL_1_2_C"/>
    <property type="match status" value="1"/>
</dbReference>
<dbReference type="Pfam" id="PF00093">
    <property type="entry name" value="VWC"/>
    <property type="match status" value="3"/>
</dbReference>
<dbReference type="SMART" id="SM00214">
    <property type="entry name" value="VWC"/>
    <property type="match status" value="3"/>
</dbReference>
<dbReference type="SUPFAM" id="SSF57603">
    <property type="entry name" value="FnI-like domain"/>
    <property type="match status" value="3"/>
</dbReference>
<dbReference type="PROSITE" id="PS01208">
    <property type="entry name" value="VWFC_1"/>
    <property type="match status" value="3"/>
</dbReference>
<dbReference type="PROSITE" id="PS50184">
    <property type="entry name" value="VWFC_2"/>
    <property type="match status" value="3"/>
</dbReference>
<keyword id="KW-0025">Alternative splicing</keyword>
<keyword id="KW-0891">Chondrogenesis</keyword>
<keyword id="KW-0217">Developmental protein</keyword>
<keyword id="KW-0221">Differentiation</keyword>
<keyword id="KW-0325">Glycoprotein</keyword>
<keyword id="KW-0892">Osteogenesis</keyword>
<keyword id="KW-0597">Phosphoprotein</keyword>
<keyword id="KW-1185">Reference proteome</keyword>
<keyword id="KW-0677">Repeat</keyword>
<keyword id="KW-0964">Secreted</keyword>
<keyword id="KW-0732">Signal</keyword>
<feature type="signal peptide" evidence="1">
    <location>
        <begin position="1"/>
        <end position="25"/>
    </location>
</feature>
<feature type="chain" id="PRO_0000005372" description="Chordin-like protein 2">
    <location>
        <begin position="26"/>
        <end position="426"/>
    </location>
</feature>
<feature type="domain" description="VWFC 1" evidence="4">
    <location>
        <begin position="31"/>
        <end position="96"/>
    </location>
</feature>
<feature type="domain" description="VWFC 2" evidence="4">
    <location>
        <begin position="109"/>
        <end position="175"/>
    </location>
</feature>
<feature type="domain" description="VWFC 3" evidence="4">
    <location>
        <begin position="246"/>
        <end position="311"/>
    </location>
</feature>
<feature type="region of interest" description="Disordered" evidence="5">
    <location>
        <begin position="182"/>
        <end position="216"/>
    </location>
</feature>
<feature type="compositionally biased region" description="Polar residues" evidence="5">
    <location>
        <begin position="182"/>
        <end position="191"/>
    </location>
</feature>
<feature type="compositionally biased region" description="Basic and acidic residues" evidence="5">
    <location>
        <begin position="192"/>
        <end position="206"/>
    </location>
</feature>
<feature type="compositionally biased region" description="Low complexity" evidence="5">
    <location>
        <begin position="207"/>
        <end position="216"/>
    </location>
</feature>
<feature type="modified residue" description="Phosphoserine" evidence="2">
    <location>
        <position position="182"/>
    </location>
</feature>
<feature type="glycosylation site" description="N-linked (GlcNAc...) asparagine" evidence="3">
    <location>
        <position position="114"/>
    </location>
</feature>
<feature type="glycosylation site" description="N-linked (GlcNAc...) asparagine" evidence="3">
    <location>
        <position position="186"/>
    </location>
</feature>
<feature type="sequence conflict" description="In Ref. 2; AAK50575." evidence="8" ref="2">
    <original>R</original>
    <variation>L</variation>
    <location>
        <position position="26"/>
    </location>
</feature>
<feature type="sequence conflict" description="In Ref. 2; AAK50575." evidence="8" ref="2">
    <original>H</original>
    <variation>Q</variation>
    <location>
        <position position="335"/>
    </location>
</feature>
<evidence type="ECO:0000250" key="1"/>
<evidence type="ECO:0000250" key="2">
    <source>
        <dbReference type="UniProtKB" id="Q6WN34"/>
    </source>
</evidence>
<evidence type="ECO:0000255" key="3"/>
<evidence type="ECO:0000255" key="4">
    <source>
        <dbReference type="PROSITE-ProRule" id="PRU00220"/>
    </source>
</evidence>
<evidence type="ECO:0000256" key="5">
    <source>
        <dbReference type="SAM" id="MobiDB-lite"/>
    </source>
</evidence>
<evidence type="ECO:0000269" key="6">
    <source>
    </source>
</evidence>
<evidence type="ECO:0000269" key="7">
    <source>
    </source>
</evidence>
<evidence type="ECO:0000305" key="8"/>
<proteinExistence type="evidence at protein level"/>
<reference key="1">
    <citation type="journal article" date="2004" name="Development">
        <title>A novel chordin-like BMP inhibitor, CHL2, expressed preferentially in chondrocytes of developing cartilage and osteoarthritic joint cartilage.</title>
        <authorList>
            <person name="Nakayama N."/>
            <person name="Han C.-Y.E."/>
            <person name="Cam L."/>
            <person name="Lee J.I."/>
            <person name="Pretorius J."/>
            <person name="Fisher S."/>
            <person name="Rosenfeld R."/>
            <person name="Scully S."/>
            <person name="Nishinakamura R."/>
            <person name="Duryea D."/>
            <person name="Van G."/>
            <person name="Bolon B."/>
            <person name="Yokota T."/>
            <person name="Zhang K."/>
        </authorList>
    </citation>
    <scope>NUCLEOTIDE SEQUENCE [MRNA]</scope>
    <scope>FUNCTION</scope>
    <scope>TISSUE SPECIFICITY</scope>
    <scope>DEVELOPMENTAL STAGE</scope>
    <scope>INTERACTION WITH BMPS; GDF5 AND INHBA</scope>
</reference>
<reference key="2">
    <citation type="submission" date="2001-01" db="EMBL/GenBank/DDBJ databases">
        <authorList>
            <person name="Coffinier C.C."/>
            <person name="De Robertis E.M."/>
        </authorList>
    </citation>
    <scope>NUCLEOTIDE SEQUENCE [MRNA]</scope>
    <source>
        <strain>C57BL/6J</strain>
    </source>
</reference>
<reference key="3">
    <citation type="journal article" date="2004" name="Genome Res.">
        <title>The status, quality, and expansion of the NIH full-length cDNA project: the Mammalian Gene Collection (MGC).</title>
        <authorList>
            <consortium name="The MGC Project Team"/>
        </authorList>
    </citation>
    <scope>NUCLEOTIDE SEQUENCE [LARGE SCALE MRNA]</scope>
    <source>
        <strain>Czech II</strain>
        <tissue>Mammary tumor</tissue>
    </source>
</reference>
<reference key="4">
    <citation type="journal article" date="2004" name="Gene">
        <title>hCHL2, a novel chordin-related gene, displays differential expression and complex alternative splicing in human tissues and during myoblast and osteoblast maturation.</title>
        <authorList>
            <person name="Oren A."/>
            <person name="Toporik A."/>
            <person name="Biton S."/>
            <person name="Almogy N."/>
            <person name="Eshel D."/>
            <person name="Bernstein J."/>
            <person name="Savitsky K."/>
            <person name="Rotman G."/>
        </authorList>
    </citation>
    <scope>FUNCTION</scope>
    <scope>ALTERNATIVE SPLICING</scope>
</reference>
<sequence>MVPGVRIIPSLLGLVMFWLPLDSQARSRSGKVCLFGEKIYTPGQSWHPYLEPQGTIYCVRCTCSENGHVNCYRLRCPPLHCSQPVMEPQQCCPRCVDPHVPSGLRVPLKSCQLNETTYQHGEIFSAQELFPARLSNQCVLCSCIEGHTYCGLMTCPEPSCPTTLPLPDSCCQTCKDRTTESSTEENLTQLQHGERHSQDPCSERRGPSTPAPTSLSSPLGFIPRHFQSVGMGSTTIKIILKEKHKKACTHNGKTYSHGEVWHPTVLSFGPMPCILCTCIDGYQDCHRVTCPTQYPCSQPKKVAGKCCKICPEDEAEDDHSEVISTRCPKVPGQFHVYTLASPSPDSLHRFVLEHEASDQVEMYIWKLVKGIYHLVQIKRVRKQDFQKEAQNFRLLTGTHEGYWTVFLAQTPELKVTASPDKVTKTL</sequence>